<keyword id="KW-0479">Metal-binding</keyword>
<keyword id="KW-1185">Reference proteome</keyword>
<keyword id="KW-0862">Zinc</keyword>
<keyword id="KW-0863">Zinc-finger</keyword>
<dbReference type="EMBL" id="AY509253">
    <property type="protein sequence ID" value="AAS00929.1"/>
    <property type="molecule type" value="Genomic_DNA"/>
</dbReference>
<dbReference type="RefSeq" id="YP_024582.1">
    <property type="nucleotide sequence ID" value="NC_005881.2"/>
</dbReference>
<dbReference type="KEGG" id="vg:2948227"/>
<dbReference type="Proteomes" id="UP000007021">
    <property type="component" value="Segment"/>
</dbReference>
<dbReference type="GO" id="GO:0008270">
    <property type="term" value="F:zinc ion binding"/>
    <property type="evidence" value="ECO:0007669"/>
    <property type="project" value="UniProtKB-KW"/>
</dbReference>
<dbReference type="Gene3D" id="3.30.40.10">
    <property type="entry name" value="Zinc/RING finger domain, C3HC4 (zinc finger)"/>
    <property type="match status" value="1"/>
</dbReference>
<dbReference type="InterPro" id="IPR001841">
    <property type="entry name" value="Znf_RING"/>
</dbReference>
<dbReference type="InterPro" id="IPR013083">
    <property type="entry name" value="Znf_RING/FYVE/PHD"/>
</dbReference>
<dbReference type="InterPro" id="IPR017907">
    <property type="entry name" value="Znf_RING_CS"/>
</dbReference>
<dbReference type="SMART" id="SM00184">
    <property type="entry name" value="RING"/>
    <property type="match status" value="1"/>
</dbReference>
<dbReference type="SUPFAM" id="SSF57850">
    <property type="entry name" value="RING/U-box"/>
    <property type="match status" value="1"/>
</dbReference>
<dbReference type="PROSITE" id="PS00518">
    <property type="entry name" value="ZF_RING_1"/>
    <property type="match status" value="1"/>
</dbReference>
<dbReference type="PROSITE" id="PS50089">
    <property type="entry name" value="ZF_RING_2"/>
    <property type="match status" value="1"/>
</dbReference>
<organismHost>
    <name type="scientific">Magallana gigas</name>
    <name type="common">Pacific oyster</name>
    <name type="synonym">Crassostrea gigas</name>
    <dbReference type="NCBI Taxonomy" id="29159"/>
</organismHost>
<organismHost>
    <name type="scientific">Pecten maximus</name>
    <name type="common">King scallop</name>
    <name type="synonym">Pilgrim's clam</name>
    <dbReference type="NCBI Taxonomy" id="6579"/>
</organismHost>
<feature type="chain" id="PRO_0000385030" description="Putative RING finger protein ORF38">
    <location>
        <begin position="1"/>
        <end position="193"/>
    </location>
</feature>
<feature type="zinc finger region" description="RING-type" evidence="1">
    <location>
        <begin position="12"/>
        <end position="50"/>
    </location>
</feature>
<sequence length="193" mass="23047">MACSKMDVDKQCCICLDDEDVDRDNTIPCRHTVCRTCYVKPMLDQCPVCREPWEARKNDESAEEYTGRHYFHTYRNGGYRGVPRFESTWGLSIDEERWQNYVQHIRPLYQGFLDERIIFENPIPVNMEYPLWEDIPHTRYLWTILKSIIINAKKIVKDVTNVPPFSPEVLEQFDDFFHEEPSRDKCTFPLRSQ</sequence>
<proteinExistence type="predicted"/>
<reference key="1">
    <citation type="journal article" date="2005" name="J. Gen. Virol.">
        <title>A novel class of herpesvirus with bivalve hosts.</title>
        <authorList>
            <person name="Davison A.J."/>
            <person name="Trus B.L."/>
            <person name="Cheng N."/>
            <person name="Steven A.C."/>
            <person name="Watson M.S."/>
            <person name="Cunningham C."/>
            <person name="Le Deuff R.M."/>
            <person name="Renault T."/>
        </authorList>
    </citation>
    <scope>NUCLEOTIDE SEQUENCE [LARGE SCALE GENOMIC DNA]</scope>
</reference>
<evidence type="ECO:0000255" key="1">
    <source>
        <dbReference type="PROSITE-ProRule" id="PRU00175"/>
    </source>
</evidence>
<protein>
    <recommendedName>
        <fullName>Putative RING finger protein ORF38</fullName>
    </recommendedName>
</protein>
<organism>
    <name type="scientific">Ostreid herpesvirus 1 (isolate France)</name>
    <name type="common">OsHV-1</name>
    <name type="synonym">Pacific oyster herpesvirus</name>
    <dbReference type="NCBI Taxonomy" id="654903"/>
    <lineage>
        <taxon>Viruses</taxon>
        <taxon>Duplodnaviria</taxon>
        <taxon>Heunggongvirae</taxon>
        <taxon>Peploviricota</taxon>
        <taxon>Herviviricetes</taxon>
        <taxon>Herpesvirales</taxon>
        <taxon>Malacoherpesviridae</taxon>
        <taxon>Ostreavirus</taxon>
        <taxon>Ostreavirus ostreidmalaco1</taxon>
        <taxon>Ostreid herpesvirus 1</taxon>
    </lineage>
</organism>
<name>Y038_OSHVF</name>
<gene>
    <name type="ORF">ORF38</name>
</gene>
<accession>Q6R7I6</accession>